<name>RSMG_AERHH</name>
<dbReference type="EC" id="2.1.1.170" evidence="1"/>
<dbReference type="EMBL" id="CP000462">
    <property type="protein sequence ID" value="ABK39348.1"/>
    <property type="molecule type" value="Genomic_DNA"/>
</dbReference>
<dbReference type="RefSeq" id="WP_011707917.1">
    <property type="nucleotide sequence ID" value="NC_008570.1"/>
</dbReference>
<dbReference type="RefSeq" id="YP_858689.1">
    <property type="nucleotide sequence ID" value="NC_008570.1"/>
</dbReference>
<dbReference type="SMR" id="A0KQY8"/>
<dbReference type="STRING" id="380703.AHA_4272"/>
<dbReference type="EnsemblBacteria" id="ABK39348">
    <property type="protein sequence ID" value="ABK39348"/>
    <property type="gene ID" value="AHA_4272"/>
</dbReference>
<dbReference type="GeneID" id="4487376"/>
<dbReference type="KEGG" id="aha:AHA_4272"/>
<dbReference type="PATRIC" id="fig|380703.7.peg.4221"/>
<dbReference type="eggNOG" id="COG0357">
    <property type="taxonomic scope" value="Bacteria"/>
</dbReference>
<dbReference type="HOGENOM" id="CLU_065341_2_0_6"/>
<dbReference type="OrthoDB" id="9808773at2"/>
<dbReference type="Proteomes" id="UP000000756">
    <property type="component" value="Chromosome"/>
</dbReference>
<dbReference type="GO" id="GO:0005829">
    <property type="term" value="C:cytosol"/>
    <property type="evidence" value="ECO:0007669"/>
    <property type="project" value="TreeGrafter"/>
</dbReference>
<dbReference type="GO" id="GO:0070043">
    <property type="term" value="F:rRNA (guanine-N7-)-methyltransferase activity"/>
    <property type="evidence" value="ECO:0007669"/>
    <property type="project" value="UniProtKB-UniRule"/>
</dbReference>
<dbReference type="CDD" id="cd02440">
    <property type="entry name" value="AdoMet_MTases"/>
    <property type="match status" value="1"/>
</dbReference>
<dbReference type="FunFam" id="3.40.50.150:FF:000032">
    <property type="entry name" value="Ribosomal RNA small subunit methyltransferase G"/>
    <property type="match status" value="1"/>
</dbReference>
<dbReference type="Gene3D" id="3.40.50.150">
    <property type="entry name" value="Vaccinia Virus protein VP39"/>
    <property type="match status" value="1"/>
</dbReference>
<dbReference type="HAMAP" id="MF_00074">
    <property type="entry name" value="16SrRNA_methyltr_G"/>
    <property type="match status" value="1"/>
</dbReference>
<dbReference type="InterPro" id="IPR003682">
    <property type="entry name" value="rRNA_ssu_MeTfrase_G"/>
</dbReference>
<dbReference type="InterPro" id="IPR029063">
    <property type="entry name" value="SAM-dependent_MTases_sf"/>
</dbReference>
<dbReference type="NCBIfam" id="TIGR00138">
    <property type="entry name" value="rsmG_gidB"/>
    <property type="match status" value="1"/>
</dbReference>
<dbReference type="PANTHER" id="PTHR31760">
    <property type="entry name" value="S-ADENOSYL-L-METHIONINE-DEPENDENT METHYLTRANSFERASES SUPERFAMILY PROTEIN"/>
    <property type="match status" value="1"/>
</dbReference>
<dbReference type="PANTHER" id="PTHR31760:SF0">
    <property type="entry name" value="S-ADENOSYL-L-METHIONINE-DEPENDENT METHYLTRANSFERASES SUPERFAMILY PROTEIN"/>
    <property type="match status" value="1"/>
</dbReference>
<dbReference type="Pfam" id="PF02527">
    <property type="entry name" value="GidB"/>
    <property type="match status" value="1"/>
</dbReference>
<dbReference type="PIRSF" id="PIRSF003078">
    <property type="entry name" value="GidB"/>
    <property type="match status" value="1"/>
</dbReference>
<dbReference type="SUPFAM" id="SSF53335">
    <property type="entry name" value="S-adenosyl-L-methionine-dependent methyltransferases"/>
    <property type="match status" value="1"/>
</dbReference>
<gene>
    <name evidence="1" type="primary">rsmG</name>
    <name type="ordered locus">AHA_4272</name>
</gene>
<proteinExistence type="inferred from homology"/>
<keyword id="KW-0963">Cytoplasm</keyword>
<keyword id="KW-0489">Methyltransferase</keyword>
<keyword id="KW-1185">Reference proteome</keyword>
<keyword id="KW-0698">rRNA processing</keyword>
<keyword id="KW-0949">S-adenosyl-L-methionine</keyword>
<keyword id="KW-0808">Transferase</keyword>
<organism>
    <name type="scientific">Aeromonas hydrophila subsp. hydrophila (strain ATCC 7966 / DSM 30187 / BCRC 13018 / CCUG 14551 / JCM 1027 / KCTC 2358 / NCIMB 9240 / NCTC 8049)</name>
    <dbReference type="NCBI Taxonomy" id="380703"/>
    <lineage>
        <taxon>Bacteria</taxon>
        <taxon>Pseudomonadati</taxon>
        <taxon>Pseudomonadota</taxon>
        <taxon>Gammaproteobacteria</taxon>
        <taxon>Aeromonadales</taxon>
        <taxon>Aeromonadaceae</taxon>
        <taxon>Aeromonas</taxon>
    </lineage>
</organism>
<comment type="function">
    <text evidence="1">Specifically methylates the N7 position of guanine in position 527 of 16S rRNA.</text>
</comment>
<comment type="catalytic activity">
    <reaction evidence="1">
        <text>guanosine(527) in 16S rRNA + S-adenosyl-L-methionine = N(7)-methylguanosine(527) in 16S rRNA + S-adenosyl-L-homocysteine</text>
        <dbReference type="Rhea" id="RHEA:42732"/>
        <dbReference type="Rhea" id="RHEA-COMP:10209"/>
        <dbReference type="Rhea" id="RHEA-COMP:10210"/>
        <dbReference type="ChEBI" id="CHEBI:57856"/>
        <dbReference type="ChEBI" id="CHEBI:59789"/>
        <dbReference type="ChEBI" id="CHEBI:74269"/>
        <dbReference type="ChEBI" id="CHEBI:74480"/>
        <dbReference type="EC" id="2.1.1.170"/>
    </reaction>
</comment>
<comment type="subcellular location">
    <subcellularLocation>
        <location evidence="1">Cytoplasm</location>
    </subcellularLocation>
</comment>
<comment type="similarity">
    <text evidence="1">Belongs to the methyltransferase superfamily. RNA methyltransferase RsmG family.</text>
</comment>
<evidence type="ECO:0000255" key="1">
    <source>
        <dbReference type="HAMAP-Rule" id="MF_00074"/>
    </source>
</evidence>
<protein>
    <recommendedName>
        <fullName evidence="1">Ribosomal RNA small subunit methyltransferase G</fullName>
        <ecNumber evidence="1">2.1.1.170</ecNumber>
    </recommendedName>
    <alternativeName>
        <fullName evidence="1">16S rRNA 7-methylguanosine methyltransferase</fullName>
        <shortName evidence="1">16S rRNA m7G methyltransferase</shortName>
    </alternativeName>
</protein>
<feature type="chain" id="PRO_1000010112" description="Ribosomal RNA small subunit methyltransferase G">
    <location>
        <begin position="1"/>
        <end position="214"/>
    </location>
</feature>
<feature type="binding site" evidence="1">
    <location>
        <position position="73"/>
    </location>
    <ligand>
        <name>S-adenosyl-L-methionine</name>
        <dbReference type="ChEBI" id="CHEBI:59789"/>
    </ligand>
</feature>
<feature type="binding site" evidence="1">
    <location>
        <position position="78"/>
    </location>
    <ligand>
        <name>S-adenosyl-L-methionine</name>
        <dbReference type="ChEBI" id="CHEBI:59789"/>
    </ligand>
</feature>
<feature type="binding site" evidence="1">
    <location>
        <begin position="124"/>
        <end position="125"/>
    </location>
    <ligand>
        <name>S-adenosyl-L-methionine</name>
        <dbReference type="ChEBI" id="CHEBI:59789"/>
    </ligand>
</feature>
<feature type="binding site" evidence="1">
    <location>
        <position position="139"/>
    </location>
    <ligand>
        <name>S-adenosyl-L-methionine</name>
        <dbReference type="ChEBI" id="CHEBI:59789"/>
    </ligand>
</feature>
<reference key="1">
    <citation type="journal article" date="2006" name="J. Bacteriol.">
        <title>Genome sequence of Aeromonas hydrophila ATCC 7966T: jack of all trades.</title>
        <authorList>
            <person name="Seshadri R."/>
            <person name="Joseph S.W."/>
            <person name="Chopra A.K."/>
            <person name="Sha J."/>
            <person name="Shaw J."/>
            <person name="Graf J."/>
            <person name="Haft D.H."/>
            <person name="Wu M."/>
            <person name="Ren Q."/>
            <person name="Rosovitz M.J."/>
            <person name="Madupu R."/>
            <person name="Tallon L."/>
            <person name="Kim M."/>
            <person name="Jin S."/>
            <person name="Vuong H."/>
            <person name="Stine O.C."/>
            <person name="Ali A."/>
            <person name="Horneman A.J."/>
            <person name="Heidelberg J.F."/>
        </authorList>
    </citation>
    <scope>NUCLEOTIDE SEQUENCE [LARGE SCALE GENOMIC DNA]</scope>
    <source>
        <strain>ATCC 7966 / DSM 30187 / BCRC 13018 / CCUG 14551 / JCM 1027 / KCTC 2358 / NCIMB 9240 / NCTC 8049</strain>
    </source>
</reference>
<sequence length="214" mass="23952">MLERLNGLLMQAGIVITDTQKTQLVQLVELLHKWNKAYNLTSVRDPDAMLVKHILDSLVVSQHLHGERFIDVGTGPGLPGLPLAIINPDKQFVLLDSLGKRINFIRQVILELGLTNVTPVKSRVEEYQPEVGFDGVLSRAFASLEDMLSWCHHLPSAQGSFLALKGQFPEQELAQLPANIHLVASHQLVVPELEGERHLLEFKHIQPEQGRSFI</sequence>
<accession>A0KQY8</accession>